<gene>
    <name type="ordered locus">HI_0114</name>
</gene>
<protein>
    <recommendedName>
        <fullName>Uncharacterized protein HI_0114</fullName>
    </recommendedName>
</protein>
<dbReference type="EMBL" id="L42023">
    <property type="protein sequence ID" value="AAC21792.1"/>
    <property type="molecule type" value="Genomic_DNA"/>
</dbReference>
<dbReference type="PIR" id="G64001">
    <property type="entry name" value="G64001"/>
</dbReference>
<dbReference type="SMR" id="P43944"/>
<dbReference type="EnsemblBacteria" id="AAC21792">
    <property type="protein sequence ID" value="AAC21792"/>
    <property type="gene ID" value="HI_0114"/>
</dbReference>
<dbReference type="KEGG" id="hin:HI_0114"/>
<dbReference type="HOGENOM" id="CLU_3374025_0_0_6"/>
<dbReference type="Proteomes" id="UP000000579">
    <property type="component" value="Chromosome"/>
</dbReference>
<sequence length="38" mass="4407">MRTTGYIVWGILIGKKGKLEEMCIDFVVKLDAKLYLNF</sequence>
<reference key="1">
    <citation type="journal article" date="1995" name="Science">
        <title>Whole-genome random sequencing and assembly of Haemophilus influenzae Rd.</title>
        <authorList>
            <person name="Fleischmann R.D."/>
            <person name="Adams M.D."/>
            <person name="White O."/>
            <person name="Clayton R.A."/>
            <person name="Kirkness E.F."/>
            <person name="Kerlavage A.R."/>
            <person name="Bult C.J."/>
            <person name="Tomb J.-F."/>
            <person name="Dougherty B.A."/>
            <person name="Merrick J.M."/>
            <person name="McKenney K."/>
            <person name="Sutton G.G."/>
            <person name="FitzHugh W."/>
            <person name="Fields C.A."/>
            <person name="Gocayne J.D."/>
            <person name="Scott J.D."/>
            <person name="Shirley R."/>
            <person name="Liu L.-I."/>
            <person name="Glodek A."/>
            <person name="Kelley J.M."/>
            <person name="Weidman J.F."/>
            <person name="Phillips C.A."/>
            <person name="Spriggs T."/>
            <person name="Hedblom E."/>
            <person name="Cotton M.D."/>
            <person name="Utterback T.R."/>
            <person name="Hanna M.C."/>
            <person name="Nguyen D.T."/>
            <person name="Saudek D.M."/>
            <person name="Brandon R.C."/>
            <person name="Fine L.D."/>
            <person name="Fritchman J.L."/>
            <person name="Fuhrmann J.L."/>
            <person name="Geoghagen N.S.M."/>
            <person name="Gnehm C.L."/>
            <person name="McDonald L.A."/>
            <person name="Small K.V."/>
            <person name="Fraser C.M."/>
            <person name="Smith H.O."/>
            <person name="Venter J.C."/>
        </authorList>
    </citation>
    <scope>NUCLEOTIDE SEQUENCE [LARGE SCALE GENOMIC DNA]</scope>
    <source>
        <strain>ATCC 51907 / DSM 11121 / KW20 / Rd</strain>
    </source>
</reference>
<proteinExistence type="predicted"/>
<name>Y114_HAEIN</name>
<accession>P43944</accession>
<feature type="chain" id="PRO_0000077891" description="Uncharacterized protein HI_0114">
    <location>
        <begin position="1"/>
        <end position="38"/>
    </location>
</feature>
<organism>
    <name type="scientific">Haemophilus influenzae (strain ATCC 51907 / DSM 11121 / KW20 / Rd)</name>
    <dbReference type="NCBI Taxonomy" id="71421"/>
    <lineage>
        <taxon>Bacteria</taxon>
        <taxon>Pseudomonadati</taxon>
        <taxon>Pseudomonadota</taxon>
        <taxon>Gammaproteobacteria</taxon>
        <taxon>Pasteurellales</taxon>
        <taxon>Pasteurellaceae</taxon>
        <taxon>Haemophilus</taxon>
    </lineage>
</organism>
<keyword id="KW-1185">Reference proteome</keyword>